<proteinExistence type="evidence at protein level"/>
<comment type="function">
    <text evidence="1">Snake venom phospholipase A2 (PLA2) that inhibits collagen-induced platelet aggregation. PLA2 catalyzes the calcium-dependent hydrolysis of the 2-acyl groups in 3-sn-phosphoglycerides (By similarity).</text>
</comment>
<comment type="catalytic activity">
    <reaction evidence="3 4">
        <text>a 1,2-diacyl-sn-glycero-3-phosphocholine + H2O = a 1-acyl-sn-glycero-3-phosphocholine + a fatty acid + H(+)</text>
        <dbReference type="Rhea" id="RHEA:15801"/>
        <dbReference type="ChEBI" id="CHEBI:15377"/>
        <dbReference type="ChEBI" id="CHEBI:15378"/>
        <dbReference type="ChEBI" id="CHEBI:28868"/>
        <dbReference type="ChEBI" id="CHEBI:57643"/>
        <dbReference type="ChEBI" id="CHEBI:58168"/>
        <dbReference type="EC" id="3.1.1.4"/>
    </reaction>
</comment>
<comment type="cofactor">
    <cofactor evidence="1">
        <name>Ca(2+)</name>
        <dbReference type="ChEBI" id="CHEBI:29108"/>
    </cofactor>
    <text evidence="1">Binds 1 Ca(2+) ion.</text>
</comment>
<comment type="subcellular location">
    <subcellularLocation>
        <location>Secreted</location>
    </subcellularLocation>
</comment>
<comment type="tissue specificity">
    <text>Expressed by the venom gland.</text>
</comment>
<comment type="similarity">
    <text evidence="5">Belongs to the phospholipase A2 family. Group I subfamily. D49 sub-subfamily.</text>
</comment>
<sequence length="146" mass="16055">MYPAHLLVLLAVCVSLLGAASVPPQPLNLVQFGYLIQCANHGSRATWHYMDYGCYCGAGGSGTPVDDLDRCCKIHDDCYGDAEKKGCSPKMLAYDYYCGENGPYCKNIKKECQRFVCDCDVKAAKCFAGAPYNDANWNIDTTKHCQ</sequence>
<reference key="1">
    <citation type="journal article" date="2011" name="J. Proteome Res.">
        <title>Identification of novel proteins from the venom of a cryptic snake Drysdalia coronoides by a combined transcriptomics and proteomics approach.</title>
        <authorList>
            <person name="Chatrath S.T."/>
            <person name="Chapeaurouge A."/>
            <person name="Lin Q."/>
            <person name="Lim T.K."/>
            <person name="Dunstan N."/>
            <person name="Mirtschin P."/>
            <person name="Kumar P.P."/>
            <person name="Kini R.M."/>
        </authorList>
    </citation>
    <scope>NUCLEOTIDE SEQUENCE [MRNA]</scope>
    <scope>IDENTIFICATION BY MASS SPECTROMETRY</scope>
    <source>
        <tissue>Venom</tissue>
        <tissue>Venom gland</tissue>
    </source>
</reference>
<protein>
    <recommendedName>
        <fullName>Phospholipase A2 147</fullName>
        <shortName>svPLA2</shortName>
        <ecNumber>3.1.1.4</ecNumber>
    </recommendedName>
    <alternativeName>
        <fullName>Phosphatidylcholine 2-acylhydrolase</fullName>
    </alternativeName>
</protein>
<keyword id="KW-0106">Calcium</keyword>
<keyword id="KW-1015">Disulfide bond</keyword>
<keyword id="KW-1199">Hemostasis impairing toxin</keyword>
<keyword id="KW-0378">Hydrolase</keyword>
<keyword id="KW-0442">Lipid degradation</keyword>
<keyword id="KW-0443">Lipid metabolism</keyword>
<keyword id="KW-0479">Metal-binding</keyword>
<keyword id="KW-1201">Platelet aggregation inhibiting toxin</keyword>
<keyword id="KW-0964">Secreted</keyword>
<keyword id="KW-0732">Signal</keyword>
<keyword id="KW-0800">Toxin</keyword>
<evidence type="ECO:0000250" key="1"/>
<evidence type="ECO:0000255" key="2"/>
<evidence type="ECO:0000255" key="3">
    <source>
        <dbReference type="PROSITE-ProRule" id="PRU10035"/>
    </source>
</evidence>
<evidence type="ECO:0000255" key="4">
    <source>
        <dbReference type="PROSITE-ProRule" id="PRU10036"/>
    </source>
</evidence>
<evidence type="ECO:0000305" key="5"/>
<feature type="signal peptide" evidence="2">
    <location>
        <begin position="1"/>
        <end position="19"/>
    </location>
</feature>
<feature type="propeptide" id="PRO_0000425512" evidence="1">
    <location>
        <begin position="20"/>
        <end position="27"/>
    </location>
</feature>
<feature type="chain" id="PRO_0000425513" description="Phospholipase A2 147">
    <location>
        <begin position="28"/>
        <end position="146"/>
    </location>
</feature>
<feature type="active site" evidence="1">
    <location>
        <position position="75"/>
    </location>
</feature>
<feature type="active site" evidence="1">
    <location>
        <position position="120"/>
    </location>
</feature>
<feature type="binding site" evidence="1">
    <location>
        <position position="55"/>
    </location>
    <ligand>
        <name>Ca(2+)</name>
        <dbReference type="ChEBI" id="CHEBI:29108"/>
    </ligand>
</feature>
<feature type="binding site" evidence="1">
    <location>
        <position position="57"/>
    </location>
    <ligand>
        <name>Ca(2+)</name>
        <dbReference type="ChEBI" id="CHEBI:29108"/>
    </ligand>
</feature>
<feature type="binding site" evidence="1">
    <location>
        <position position="59"/>
    </location>
    <ligand>
        <name>Ca(2+)</name>
        <dbReference type="ChEBI" id="CHEBI:29108"/>
    </ligand>
</feature>
<feature type="binding site" evidence="1">
    <location>
        <position position="76"/>
    </location>
    <ligand>
        <name>Ca(2+)</name>
        <dbReference type="ChEBI" id="CHEBI:29108"/>
    </ligand>
</feature>
<feature type="disulfide bond" evidence="1">
    <location>
        <begin position="38"/>
        <end position="98"/>
    </location>
</feature>
<feature type="disulfide bond" evidence="1">
    <location>
        <begin position="54"/>
        <end position="145"/>
    </location>
</feature>
<feature type="disulfide bond" evidence="1">
    <location>
        <begin position="56"/>
        <end position="72"/>
    </location>
</feature>
<feature type="disulfide bond" evidence="1">
    <location>
        <begin position="71"/>
        <end position="126"/>
    </location>
</feature>
<feature type="disulfide bond" evidence="1">
    <location>
        <begin position="78"/>
        <end position="119"/>
    </location>
</feature>
<feature type="disulfide bond" evidence="1">
    <location>
        <begin position="87"/>
        <end position="112"/>
    </location>
</feature>
<feature type="disulfide bond" evidence="1">
    <location>
        <begin position="105"/>
        <end position="117"/>
    </location>
</feature>
<name>PA214_DRYCN</name>
<dbReference type="EC" id="3.1.1.4"/>
<dbReference type="EMBL" id="FJ752448">
    <property type="protein sequence ID" value="ACR78470.1"/>
    <property type="molecule type" value="mRNA"/>
</dbReference>
<dbReference type="SMR" id="F8J2D0"/>
<dbReference type="GO" id="GO:0005576">
    <property type="term" value="C:extracellular region"/>
    <property type="evidence" value="ECO:0007669"/>
    <property type="project" value="UniProtKB-SubCell"/>
</dbReference>
<dbReference type="GO" id="GO:0005509">
    <property type="term" value="F:calcium ion binding"/>
    <property type="evidence" value="ECO:0007669"/>
    <property type="project" value="InterPro"/>
</dbReference>
<dbReference type="GO" id="GO:0047498">
    <property type="term" value="F:calcium-dependent phospholipase A2 activity"/>
    <property type="evidence" value="ECO:0007669"/>
    <property type="project" value="TreeGrafter"/>
</dbReference>
<dbReference type="GO" id="GO:0005543">
    <property type="term" value="F:phospholipid binding"/>
    <property type="evidence" value="ECO:0007669"/>
    <property type="project" value="TreeGrafter"/>
</dbReference>
<dbReference type="GO" id="GO:0090729">
    <property type="term" value="F:toxin activity"/>
    <property type="evidence" value="ECO:0007669"/>
    <property type="project" value="UniProtKB-KW"/>
</dbReference>
<dbReference type="GO" id="GO:0050482">
    <property type="term" value="P:arachidonate secretion"/>
    <property type="evidence" value="ECO:0007669"/>
    <property type="project" value="InterPro"/>
</dbReference>
<dbReference type="GO" id="GO:0016042">
    <property type="term" value="P:lipid catabolic process"/>
    <property type="evidence" value="ECO:0007669"/>
    <property type="project" value="UniProtKB-KW"/>
</dbReference>
<dbReference type="GO" id="GO:0006644">
    <property type="term" value="P:phospholipid metabolic process"/>
    <property type="evidence" value="ECO:0007669"/>
    <property type="project" value="InterPro"/>
</dbReference>
<dbReference type="CDD" id="cd00125">
    <property type="entry name" value="PLA2c"/>
    <property type="match status" value="1"/>
</dbReference>
<dbReference type="FunFam" id="1.20.90.10:FF:000007">
    <property type="entry name" value="Acidic phospholipase A2"/>
    <property type="match status" value="1"/>
</dbReference>
<dbReference type="Gene3D" id="1.20.90.10">
    <property type="entry name" value="Phospholipase A2 domain"/>
    <property type="match status" value="1"/>
</dbReference>
<dbReference type="InterPro" id="IPR001211">
    <property type="entry name" value="PLipase_A2"/>
</dbReference>
<dbReference type="InterPro" id="IPR033112">
    <property type="entry name" value="PLipase_A2_Asp_AS"/>
</dbReference>
<dbReference type="InterPro" id="IPR016090">
    <property type="entry name" value="PLipase_A2_dom"/>
</dbReference>
<dbReference type="InterPro" id="IPR036444">
    <property type="entry name" value="PLipase_A2_dom_sf"/>
</dbReference>
<dbReference type="InterPro" id="IPR033113">
    <property type="entry name" value="PLipase_A2_His_AS"/>
</dbReference>
<dbReference type="PANTHER" id="PTHR11716:SF106">
    <property type="entry name" value="PHOSPHOLIPASE A2 A2-ACTITOXIN-UCS2A-LIKE"/>
    <property type="match status" value="1"/>
</dbReference>
<dbReference type="PANTHER" id="PTHR11716">
    <property type="entry name" value="PHOSPHOLIPASE A2 FAMILY MEMBER"/>
    <property type="match status" value="1"/>
</dbReference>
<dbReference type="Pfam" id="PF00068">
    <property type="entry name" value="Phospholip_A2_1"/>
    <property type="match status" value="1"/>
</dbReference>
<dbReference type="PRINTS" id="PR00389">
    <property type="entry name" value="PHPHLIPASEA2"/>
</dbReference>
<dbReference type="SMART" id="SM00085">
    <property type="entry name" value="PA2c"/>
    <property type="match status" value="1"/>
</dbReference>
<dbReference type="SUPFAM" id="SSF48619">
    <property type="entry name" value="Phospholipase A2, PLA2"/>
    <property type="match status" value="1"/>
</dbReference>
<dbReference type="PROSITE" id="PS00119">
    <property type="entry name" value="PA2_ASP"/>
    <property type="match status" value="1"/>
</dbReference>
<dbReference type="PROSITE" id="PS00118">
    <property type="entry name" value="PA2_HIS"/>
    <property type="match status" value="1"/>
</dbReference>
<accession>F8J2D0</accession>
<organism>
    <name type="scientific">Drysdalia coronoides</name>
    <name type="common">White-lipped snake</name>
    <name type="synonym">Hoplocephalus coronoides</name>
    <dbReference type="NCBI Taxonomy" id="66186"/>
    <lineage>
        <taxon>Eukaryota</taxon>
        <taxon>Metazoa</taxon>
        <taxon>Chordata</taxon>
        <taxon>Craniata</taxon>
        <taxon>Vertebrata</taxon>
        <taxon>Euteleostomi</taxon>
        <taxon>Lepidosauria</taxon>
        <taxon>Squamata</taxon>
        <taxon>Bifurcata</taxon>
        <taxon>Unidentata</taxon>
        <taxon>Episquamata</taxon>
        <taxon>Toxicofera</taxon>
        <taxon>Serpentes</taxon>
        <taxon>Colubroidea</taxon>
        <taxon>Elapidae</taxon>
        <taxon>Notechinae</taxon>
        <taxon>Drysdalia</taxon>
    </lineage>
</organism>